<feature type="chain" id="PRO_0000065464" description="Uncharacterized protein T16H12.1">
    <location>
        <begin position="1"/>
        <end position="349"/>
    </location>
</feature>
<feature type="region of interest" description="Disordered" evidence="1">
    <location>
        <begin position="116"/>
        <end position="148"/>
    </location>
</feature>
<feature type="compositionally biased region" description="Polar residues" evidence="1">
    <location>
        <begin position="116"/>
        <end position="135"/>
    </location>
</feature>
<organism>
    <name type="scientific">Caenorhabditis elegans</name>
    <dbReference type="NCBI Taxonomy" id="6239"/>
    <lineage>
        <taxon>Eukaryota</taxon>
        <taxon>Metazoa</taxon>
        <taxon>Ecdysozoa</taxon>
        <taxon>Nematoda</taxon>
        <taxon>Chromadorea</taxon>
        <taxon>Rhabditida</taxon>
        <taxon>Rhabditina</taxon>
        <taxon>Rhabditomorpha</taxon>
        <taxon>Rhabditoidea</taxon>
        <taxon>Rhabditidae</taxon>
        <taxon>Peloderinae</taxon>
        <taxon>Caenorhabditis</taxon>
    </lineage>
</organism>
<sequence>MSLRLTSSLNQNKTTNVNGAISRCLWRTETRCSTGYGSKSGFAEEVGRKKLEIGRLELKWERKLDSLDLFVRRKFEKILFPNGNKSSRKKANLDKNRNIATKVANRFELSLNQPVHFSQTNPKSTPEPPCTSSSGAGDCHENLPADGYPIENDDGMGEPARMLGKIKKPRSRLECIFCKDSHTRSIVNCPNIRKISDRTNILIVQGRKIDNTEKQRKAKKTDVRVGRKFDALRNFIERNIEEVARDEPISEQKVNHRSEFSEQIIFGDYERGPTFLTGNLVSSGLSTFTMDSEVSNDSFGIPGTMPSPKYLVSPISNPTFSNKKTRLIRQCHQLHSRNCAYFVEMSIFQ</sequence>
<accession>P34564</accession>
<name>YNV1_CAEEL</name>
<evidence type="ECO:0000256" key="1">
    <source>
        <dbReference type="SAM" id="MobiDB-lite"/>
    </source>
</evidence>
<dbReference type="EMBL" id="Z30662">
    <property type="protein sequence ID" value="CAA83137.2"/>
    <property type="molecule type" value="Genomic_DNA"/>
</dbReference>
<dbReference type="PIR" id="S42383">
    <property type="entry name" value="S42383"/>
</dbReference>
<dbReference type="RefSeq" id="NP_001255062.1">
    <property type="nucleotide sequence ID" value="NM_001268133.1"/>
</dbReference>
<dbReference type="FunCoup" id="P34564">
    <property type="interactions" value="1"/>
</dbReference>
<dbReference type="PaxDb" id="6239-T16H12.1a"/>
<dbReference type="UCSC" id="T16H12.1">
    <property type="organism name" value="c. elegans"/>
</dbReference>
<dbReference type="WormBase" id="T16H12.1a">
    <property type="protein sequence ID" value="CE44071"/>
    <property type="gene ID" value="WBGene00011811"/>
</dbReference>
<dbReference type="HOGENOM" id="CLU_068327_0_0_1"/>
<dbReference type="InParanoid" id="P34564"/>
<dbReference type="PRO" id="PR:P34564"/>
<dbReference type="Proteomes" id="UP000001940">
    <property type="component" value="Chromosome III"/>
</dbReference>
<dbReference type="Bgee" id="WBGene00011811">
    <property type="expression patterns" value="Expressed in adult organism and 1 other cell type or tissue"/>
</dbReference>
<reference key="1">
    <citation type="journal article" date="1998" name="Science">
        <title>Genome sequence of the nematode C. elegans: a platform for investigating biology.</title>
        <authorList>
            <consortium name="The C. elegans sequencing consortium"/>
        </authorList>
    </citation>
    <scope>NUCLEOTIDE SEQUENCE [LARGE SCALE GENOMIC DNA]</scope>
    <source>
        <strain>Bristol N2</strain>
    </source>
</reference>
<gene>
    <name type="ORF">T16H12.1</name>
</gene>
<protein>
    <recommendedName>
        <fullName>Uncharacterized protein T16H12.1</fullName>
    </recommendedName>
</protein>
<keyword id="KW-1185">Reference proteome</keyword>
<proteinExistence type="predicted"/>